<name>N190_PIG</name>
<protein>
    <recommendedName>
        <fullName>Neuronal protein NP-190</fullName>
    </recommendedName>
</protein>
<reference evidence="3" key="1">
    <citation type="journal article" date="1998" name="J. Biochem.">
        <title>Identification and characterization of porcine NP-190, a novel protein that is specifically expressed in the axonal membrane during the embryonic period.</title>
        <authorList>
            <person name="Ho S.-C."/>
            <person name="Wakatsuki S."/>
            <person name="Arioka M."/>
            <person name="Yamasaki M."/>
            <person name="Kitamoto K."/>
        </authorList>
    </citation>
    <scope>PROTEIN SEQUENCE</scope>
    <scope>FUNCTION</scope>
    <scope>SUBCELLULAR LOCATION</scope>
    <scope>TISSUE SPECIFICITY</scope>
    <scope>DEVELOPMENTAL STAGE</scope>
    <source>
        <tissue evidence="1">Fetal brain</tissue>
    </source>
</reference>
<accession>P82126</accession>
<keyword id="KW-0217">Developmental protein</keyword>
<keyword id="KW-0903">Direct protein sequencing</keyword>
<keyword id="KW-0472">Membrane</keyword>
<keyword id="KW-1185">Reference proteome</keyword>
<dbReference type="eggNOG" id="KOG1792">
    <property type="taxonomic scope" value="Eukaryota"/>
</dbReference>
<dbReference type="InParanoid" id="P82126"/>
<dbReference type="Proteomes" id="UP000008227">
    <property type="component" value="Unplaced"/>
</dbReference>
<dbReference type="Proteomes" id="UP000314985">
    <property type="component" value="Unplaced"/>
</dbReference>
<dbReference type="Proteomes" id="UP000694570">
    <property type="component" value="Unplaced"/>
</dbReference>
<dbReference type="Proteomes" id="UP000694571">
    <property type="component" value="Unplaced"/>
</dbReference>
<dbReference type="Proteomes" id="UP000694720">
    <property type="component" value="Unplaced"/>
</dbReference>
<dbReference type="Proteomes" id="UP000694722">
    <property type="component" value="Unplaced"/>
</dbReference>
<dbReference type="Proteomes" id="UP000694723">
    <property type="component" value="Unplaced"/>
</dbReference>
<dbReference type="Proteomes" id="UP000694724">
    <property type="component" value="Unplaced"/>
</dbReference>
<dbReference type="Proteomes" id="UP000694725">
    <property type="component" value="Unplaced"/>
</dbReference>
<dbReference type="Proteomes" id="UP000694726">
    <property type="component" value="Unplaced"/>
</dbReference>
<dbReference type="Proteomes" id="UP000694727">
    <property type="component" value="Unplaced"/>
</dbReference>
<dbReference type="Proteomes" id="UP000694728">
    <property type="component" value="Unplaced"/>
</dbReference>
<dbReference type="GO" id="GO:0016020">
    <property type="term" value="C:membrane"/>
    <property type="evidence" value="ECO:0007669"/>
    <property type="project" value="UniProtKB-SubCell"/>
</dbReference>
<organism>
    <name type="scientific">Sus scrofa</name>
    <name type="common">Pig</name>
    <dbReference type="NCBI Taxonomy" id="9823"/>
    <lineage>
        <taxon>Eukaryota</taxon>
        <taxon>Metazoa</taxon>
        <taxon>Chordata</taxon>
        <taxon>Craniata</taxon>
        <taxon>Vertebrata</taxon>
        <taxon>Euteleostomi</taxon>
        <taxon>Mammalia</taxon>
        <taxon>Eutheria</taxon>
        <taxon>Laurasiatheria</taxon>
        <taxon>Artiodactyla</taxon>
        <taxon>Suina</taxon>
        <taxon>Suidae</taxon>
        <taxon>Sus</taxon>
    </lineage>
</organism>
<evidence type="ECO:0000269" key="1">
    <source>
    </source>
</evidence>
<evidence type="ECO:0000303" key="2">
    <source>
    </source>
</evidence>
<evidence type="ECO:0000305" key="3"/>
<proteinExistence type="evidence at protein level"/>
<sequence>VAHDRKFKNVQPKDXXKVPAIAVANPKEEVIVKNKDEKMADLRNVPKXDVIXK</sequence>
<feature type="chain" id="PRO_0000311682" description="Neuronal protein NP-190">
    <location>
        <begin position="1" status="less than"/>
        <end position="53" status="greater than"/>
    </location>
</feature>
<feature type="non-consecutive residues" evidence="2">
    <location>
        <begin position="19"/>
        <end position="20"/>
    </location>
</feature>
<feature type="non-consecutive residues" evidence="2">
    <location>
        <begin position="38"/>
        <end position="39"/>
    </location>
</feature>
<feature type="non-terminal residue" evidence="2">
    <location>
        <position position="1"/>
    </location>
</feature>
<feature type="non-terminal residue" evidence="2">
    <location>
        <position position="53"/>
    </location>
</feature>
<comment type="function">
    <text evidence="1">Neuronal antigen that may play a role in brain development. May be involved in neurite formation or axonal guidance.</text>
</comment>
<comment type="subcellular location">
    <subcellularLocation>
        <location evidence="1">Membrane</location>
    </subcellularLocation>
</comment>
<comment type="tissue specificity">
    <text evidence="1">Mainly expressed in the fetal brain where it is specifically localized to the proximal axonal segments, cell bodies and growth cones. Lower level of expression was also detected in the fetal heart and the skeletal muscle. No expression in kidney, liver, lung or spleen.</text>
</comment>
<comment type="developmental stage">
    <text evidence="1">Developmentally regulated. Present only during embryonic and neonatal stages.</text>
</comment>